<sequence length="433" mass="48609">MTATWEKKEGNEGLLTVTVPAEKVNKALDQAFKKVVKQINVPGFRKGKVPRPIFEQRFGVEALYQDAIDILLPDAYGEAIDETDIKPVAQPEVSVTQIEKGKDFIFEATVTVEPEVKLGDYKGLEIEKQETELSDDELQEAIDHSLGHLAEMVVKEDGVVENGDTVNIDFSGSVDGEEFEGGQAEGYDLEIGSGSFIPGFEEQLEGMKVDEEKDVVVTFPEEYHAEELAGKEATFKTKVNEIKFKEVPELTDEIANELDAEANTVDEYKENLRKRLAEQKATDAENVEKEEAITKATDNTTIDIPEAMVNTELDRMVSEFAQRIQQQGLDLQTYFQISGQDETQLREQMKDDAEQRVKTNLTLTAIAEAEKIEATDEDIDKELEKMSKQFNISVEDIKNTLGNTDIIKNDVRIQKVIDLLRDNAKFVEGTKED</sequence>
<gene>
    <name evidence="1" type="primary">tig</name>
    <name type="ordered locus">SAUSA300_1622</name>
</gene>
<evidence type="ECO:0000255" key="1">
    <source>
        <dbReference type="HAMAP-Rule" id="MF_00303"/>
    </source>
</evidence>
<dbReference type="EC" id="5.2.1.8" evidence="1"/>
<dbReference type="EMBL" id="CP000255">
    <property type="protein sequence ID" value="ABD21039.1"/>
    <property type="molecule type" value="Genomic_DNA"/>
</dbReference>
<dbReference type="RefSeq" id="WP_000127573.1">
    <property type="nucleotide sequence ID" value="NZ_CP027476.1"/>
</dbReference>
<dbReference type="SMR" id="Q2FG61"/>
<dbReference type="KEGG" id="saa:SAUSA300_1622"/>
<dbReference type="HOGENOM" id="CLU_033058_3_2_9"/>
<dbReference type="OMA" id="KGIKTQF"/>
<dbReference type="Proteomes" id="UP000001939">
    <property type="component" value="Chromosome"/>
</dbReference>
<dbReference type="GO" id="GO:0005737">
    <property type="term" value="C:cytoplasm"/>
    <property type="evidence" value="ECO:0007669"/>
    <property type="project" value="UniProtKB-SubCell"/>
</dbReference>
<dbReference type="GO" id="GO:0003755">
    <property type="term" value="F:peptidyl-prolyl cis-trans isomerase activity"/>
    <property type="evidence" value="ECO:0007669"/>
    <property type="project" value="UniProtKB-UniRule"/>
</dbReference>
<dbReference type="GO" id="GO:0044183">
    <property type="term" value="F:protein folding chaperone"/>
    <property type="evidence" value="ECO:0007669"/>
    <property type="project" value="TreeGrafter"/>
</dbReference>
<dbReference type="GO" id="GO:0043022">
    <property type="term" value="F:ribosome binding"/>
    <property type="evidence" value="ECO:0007669"/>
    <property type="project" value="TreeGrafter"/>
</dbReference>
<dbReference type="GO" id="GO:0051083">
    <property type="term" value="P:'de novo' cotranslational protein folding"/>
    <property type="evidence" value="ECO:0007669"/>
    <property type="project" value="TreeGrafter"/>
</dbReference>
<dbReference type="GO" id="GO:0051301">
    <property type="term" value="P:cell division"/>
    <property type="evidence" value="ECO:0007669"/>
    <property type="project" value="UniProtKB-KW"/>
</dbReference>
<dbReference type="GO" id="GO:0061077">
    <property type="term" value="P:chaperone-mediated protein folding"/>
    <property type="evidence" value="ECO:0007669"/>
    <property type="project" value="TreeGrafter"/>
</dbReference>
<dbReference type="GO" id="GO:0015031">
    <property type="term" value="P:protein transport"/>
    <property type="evidence" value="ECO:0007669"/>
    <property type="project" value="UniProtKB-UniRule"/>
</dbReference>
<dbReference type="GO" id="GO:0043335">
    <property type="term" value="P:protein unfolding"/>
    <property type="evidence" value="ECO:0007669"/>
    <property type="project" value="TreeGrafter"/>
</dbReference>
<dbReference type="FunFam" id="3.10.50.40:FF:000001">
    <property type="entry name" value="Trigger factor"/>
    <property type="match status" value="1"/>
</dbReference>
<dbReference type="FunFam" id="3.30.70.1050:FF:000002">
    <property type="entry name" value="Trigger factor"/>
    <property type="match status" value="1"/>
</dbReference>
<dbReference type="Gene3D" id="3.10.50.40">
    <property type="match status" value="1"/>
</dbReference>
<dbReference type="Gene3D" id="3.30.70.1050">
    <property type="entry name" value="Trigger factor ribosome-binding domain"/>
    <property type="match status" value="1"/>
</dbReference>
<dbReference type="Gene3D" id="1.10.3120.10">
    <property type="entry name" value="Trigger factor, C-terminal domain"/>
    <property type="match status" value="1"/>
</dbReference>
<dbReference type="HAMAP" id="MF_00303">
    <property type="entry name" value="Trigger_factor_Tig"/>
    <property type="match status" value="1"/>
</dbReference>
<dbReference type="InterPro" id="IPR046357">
    <property type="entry name" value="PPIase_dom_sf"/>
</dbReference>
<dbReference type="InterPro" id="IPR001179">
    <property type="entry name" value="PPIase_FKBP_dom"/>
</dbReference>
<dbReference type="InterPro" id="IPR005215">
    <property type="entry name" value="Trig_fac"/>
</dbReference>
<dbReference type="InterPro" id="IPR008880">
    <property type="entry name" value="Trigger_fac_C"/>
</dbReference>
<dbReference type="InterPro" id="IPR037041">
    <property type="entry name" value="Trigger_fac_C_sf"/>
</dbReference>
<dbReference type="InterPro" id="IPR008881">
    <property type="entry name" value="Trigger_fac_ribosome-bd_bac"/>
</dbReference>
<dbReference type="InterPro" id="IPR036611">
    <property type="entry name" value="Trigger_fac_ribosome-bd_sf"/>
</dbReference>
<dbReference type="InterPro" id="IPR027304">
    <property type="entry name" value="Trigger_fact/SurA_dom_sf"/>
</dbReference>
<dbReference type="NCBIfam" id="TIGR00115">
    <property type="entry name" value="tig"/>
    <property type="match status" value="1"/>
</dbReference>
<dbReference type="PANTHER" id="PTHR30560">
    <property type="entry name" value="TRIGGER FACTOR CHAPERONE AND PEPTIDYL-PROLYL CIS/TRANS ISOMERASE"/>
    <property type="match status" value="1"/>
</dbReference>
<dbReference type="PANTHER" id="PTHR30560:SF3">
    <property type="entry name" value="TRIGGER FACTOR-LIKE PROTEIN TIG, CHLOROPLASTIC"/>
    <property type="match status" value="1"/>
</dbReference>
<dbReference type="Pfam" id="PF00254">
    <property type="entry name" value="FKBP_C"/>
    <property type="match status" value="1"/>
</dbReference>
<dbReference type="Pfam" id="PF05698">
    <property type="entry name" value="Trigger_C"/>
    <property type="match status" value="1"/>
</dbReference>
<dbReference type="Pfam" id="PF05697">
    <property type="entry name" value="Trigger_N"/>
    <property type="match status" value="1"/>
</dbReference>
<dbReference type="PIRSF" id="PIRSF003095">
    <property type="entry name" value="Trigger_factor"/>
    <property type="match status" value="1"/>
</dbReference>
<dbReference type="SUPFAM" id="SSF54534">
    <property type="entry name" value="FKBP-like"/>
    <property type="match status" value="1"/>
</dbReference>
<dbReference type="SUPFAM" id="SSF109998">
    <property type="entry name" value="Triger factor/SurA peptide-binding domain-like"/>
    <property type="match status" value="1"/>
</dbReference>
<dbReference type="SUPFAM" id="SSF102735">
    <property type="entry name" value="Trigger factor ribosome-binding domain"/>
    <property type="match status" value="1"/>
</dbReference>
<dbReference type="PROSITE" id="PS50059">
    <property type="entry name" value="FKBP_PPIASE"/>
    <property type="match status" value="1"/>
</dbReference>
<feature type="chain" id="PRO_0000256623" description="Trigger factor">
    <location>
        <begin position="1"/>
        <end position="433"/>
    </location>
</feature>
<feature type="domain" description="PPIase FKBP-type" evidence="1">
    <location>
        <begin position="163"/>
        <end position="248"/>
    </location>
</feature>
<keyword id="KW-0131">Cell cycle</keyword>
<keyword id="KW-0132">Cell division</keyword>
<keyword id="KW-0143">Chaperone</keyword>
<keyword id="KW-0963">Cytoplasm</keyword>
<keyword id="KW-0413">Isomerase</keyword>
<keyword id="KW-0697">Rotamase</keyword>
<organism>
    <name type="scientific">Staphylococcus aureus (strain USA300)</name>
    <dbReference type="NCBI Taxonomy" id="367830"/>
    <lineage>
        <taxon>Bacteria</taxon>
        <taxon>Bacillati</taxon>
        <taxon>Bacillota</taxon>
        <taxon>Bacilli</taxon>
        <taxon>Bacillales</taxon>
        <taxon>Staphylococcaceae</taxon>
        <taxon>Staphylococcus</taxon>
    </lineage>
</organism>
<comment type="function">
    <text evidence="1">Involved in protein export. Acts as a chaperone by maintaining the newly synthesized protein in an open conformation. Functions as a peptidyl-prolyl cis-trans isomerase.</text>
</comment>
<comment type="catalytic activity">
    <reaction evidence="1">
        <text>[protein]-peptidylproline (omega=180) = [protein]-peptidylproline (omega=0)</text>
        <dbReference type="Rhea" id="RHEA:16237"/>
        <dbReference type="Rhea" id="RHEA-COMP:10747"/>
        <dbReference type="Rhea" id="RHEA-COMP:10748"/>
        <dbReference type="ChEBI" id="CHEBI:83833"/>
        <dbReference type="ChEBI" id="CHEBI:83834"/>
        <dbReference type="EC" id="5.2.1.8"/>
    </reaction>
</comment>
<comment type="subcellular location">
    <subcellularLocation>
        <location>Cytoplasm</location>
    </subcellularLocation>
    <text evidence="1">About half TF is bound to the ribosome near the polypeptide exit tunnel while the other half is free in the cytoplasm.</text>
</comment>
<comment type="domain">
    <text evidence="1">Consists of 3 domains; the N-terminus binds the ribosome, the middle domain has PPIase activity, while the C-terminus has intrinsic chaperone activity on its own.</text>
</comment>
<comment type="similarity">
    <text evidence="1">Belongs to the FKBP-type PPIase family. Tig subfamily.</text>
</comment>
<protein>
    <recommendedName>
        <fullName evidence="1">Trigger factor</fullName>
        <shortName evidence="1">TF</shortName>
        <ecNumber evidence="1">5.2.1.8</ecNumber>
    </recommendedName>
    <alternativeName>
        <fullName evidence="1">PPIase</fullName>
    </alternativeName>
</protein>
<proteinExistence type="inferred from homology"/>
<reference key="1">
    <citation type="journal article" date="2006" name="Lancet">
        <title>Complete genome sequence of USA300, an epidemic clone of community-acquired meticillin-resistant Staphylococcus aureus.</title>
        <authorList>
            <person name="Diep B.A."/>
            <person name="Gill S.R."/>
            <person name="Chang R.F."/>
            <person name="Phan T.H."/>
            <person name="Chen J.H."/>
            <person name="Davidson M.G."/>
            <person name="Lin F."/>
            <person name="Lin J."/>
            <person name="Carleton H.A."/>
            <person name="Mongodin E.F."/>
            <person name="Sensabaugh G.F."/>
            <person name="Perdreau-Remington F."/>
        </authorList>
    </citation>
    <scope>NUCLEOTIDE SEQUENCE [LARGE SCALE GENOMIC DNA]</scope>
    <source>
        <strain>USA300</strain>
    </source>
</reference>
<name>TIG_STAA3</name>
<accession>Q2FG61</accession>